<evidence type="ECO:0000269" key="1">
    <source>
    </source>
</evidence>
<evidence type="ECO:0000269" key="2">
    <source>
    </source>
</evidence>
<evidence type="ECO:0000269" key="3">
    <source>
    </source>
</evidence>
<evidence type="ECO:0000269" key="4">
    <source>
    </source>
</evidence>
<evidence type="ECO:0000269" key="5">
    <source>
    </source>
</evidence>
<evidence type="ECO:0000269" key="6">
    <source>
    </source>
</evidence>
<evidence type="ECO:0000269" key="7">
    <source>
    </source>
</evidence>
<evidence type="ECO:0000305" key="8"/>
<evidence type="ECO:0007744" key="9">
    <source>
        <dbReference type="PDB" id="3BTN"/>
    </source>
</evidence>
<evidence type="ECO:0007829" key="10">
    <source>
        <dbReference type="PDB" id="3BTN"/>
    </source>
</evidence>
<reference key="1">
    <citation type="journal article" date="2000" name="Biochem. J.">
        <title>Antizyme inhibitor is rapidly induced in growth-stimulated mouse fibroblasts and releases ornithine decarboxylase from antizyme suppression.</title>
        <authorList>
            <person name="Nilsson J."/>
            <person name="Grahn B."/>
            <person name="Heby O."/>
        </authorList>
    </citation>
    <scope>NUCLEOTIDE SEQUENCE [MRNA]</scope>
    <scope>FUNCTION</scope>
    <source>
        <strain>BALB/cJ</strain>
    </source>
</reference>
<reference key="2">
    <citation type="journal article" date="2005" name="Science">
        <title>The transcriptional landscape of the mammalian genome.</title>
        <authorList>
            <person name="Carninci P."/>
            <person name="Kasukawa T."/>
            <person name="Katayama S."/>
            <person name="Gough J."/>
            <person name="Frith M.C."/>
            <person name="Maeda N."/>
            <person name="Oyama R."/>
            <person name="Ravasi T."/>
            <person name="Lenhard B."/>
            <person name="Wells C."/>
            <person name="Kodzius R."/>
            <person name="Shimokawa K."/>
            <person name="Bajic V.B."/>
            <person name="Brenner S.E."/>
            <person name="Batalov S."/>
            <person name="Forrest A.R."/>
            <person name="Zavolan M."/>
            <person name="Davis M.J."/>
            <person name="Wilming L.G."/>
            <person name="Aidinis V."/>
            <person name="Allen J.E."/>
            <person name="Ambesi-Impiombato A."/>
            <person name="Apweiler R."/>
            <person name="Aturaliya R.N."/>
            <person name="Bailey T.L."/>
            <person name="Bansal M."/>
            <person name="Baxter L."/>
            <person name="Beisel K.W."/>
            <person name="Bersano T."/>
            <person name="Bono H."/>
            <person name="Chalk A.M."/>
            <person name="Chiu K.P."/>
            <person name="Choudhary V."/>
            <person name="Christoffels A."/>
            <person name="Clutterbuck D.R."/>
            <person name="Crowe M.L."/>
            <person name="Dalla E."/>
            <person name="Dalrymple B.P."/>
            <person name="de Bono B."/>
            <person name="Della Gatta G."/>
            <person name="di Bernardo D."/>
            <person name="Down T."/>
            <person name="Engstrom P."/>
            <person name="Fagiolini M."/>
            <person name="Faulkner G."/>
            <person name="Fletcher C.F."/>
            <person name="Fukushima T."/>
            <person name="Furuno M."/>
            <person name="Futaki S."/>
            <person name="Gariboldi M."/>
            <person name="Georgii-Hemming P."/>
            <person name="Gingeras T.R."/>
            <person name="Gojobori T."/>
            <person name="Green R.E."/>
            <person name="Gustincich S."/>
            <person name="Harbers M."/>
            <person name="Hayashi Y."/>
            <person name="Hensch T.K."/>
            <person name="Hirokawa N."/>
            <person name="Hill D."/>
            <person name="Huminiecki L."/>
            <person name="Iacono M."/>
            <person name="Ikeo K."/>
            <person name="Iwama A."/>
            <person name="Ishikawa T."/>
            <person name="Jakt M."/>
            <person name="Kanapin A."/>
            <person name="Katoh M."/>
            <person name="Kawasawa Y."/>
            <person name="Kelso J."/>
            <person name="Kitamura H."/>
            <person name="Kitano H."/>
            <person name="Kollias G."/>
            <person name="Krishnan S.P."/>
            <person name="Kruger A."/>
            <person name="Kummerfeld S.K."/>
            <person name="Kurochkin I.V."/>
            <person name="Lareau L.F."/>
            <person name="Lazarevic D."/>
            <person name="Lipovich L."/>
            <person name="Liu J."/>
            <person name="Liuni S."/>
            <person name="McWilliam S."/>
            <person name="Madan Babu M."/>
            <person name="Madera M."/>
            <person name="Marchionni L."/>
            <person name="Matsuda H."/>
            <person name="Matsuzawa S."/>
            <person name="Miki H."/>
            <person name="Mignone F."/>
            <person name="Miyake S."/>
            <person name="Morris K."/>
            <person name="Mottagui-Tabar S."/>
            <person name="Mulder N."/>
            <person name="Nakano N."/>
            <person name="Nakauchi H."/>
            <person name="Ng P."/>
            <person name="Nilsson R."/>
            <person name="Nishiguchi S."/>
            <person name="Nishikawa S."/>
            <person name="Nori F."/>
            <person name="Ohara O."/>
            <person name="Okazaki Y."/>
            <person name="Orlando V."/>
            <person name="Pang K.C."/>
            <person name="Pavan W.J."/>
            <person name="Pavesi G."/>
            <person name="Pesole G."/>
            <person name="Petrovsky N."/>
            <person name="Piazza S."/>
            <person name="Reed J."/>
            <person name="Reid J.F."/>
            <person name="Ring B.Z."/>
            <person name="Ringwald M."/>
            <person name="Rost B."/>
            <person name="Ruan Y."/>
            <person name="Salzberg S.L."/>
            <person name="Sandelin A."/>
            <person name="Schneider C."/>
            <person name="Schoenbach C."/>
            <person name="Sekiguchi K."/>
            <person name="Semple C.A."/>
            <person name="Seno S."/>
            <person name="Sessa L."/>
            <person name="Sheng Y."/>
            <person name="Shibata Y."/>
            <person name="Shimada H."/>
            <person name="Shimada K."/>
            <person name="Silva D."/>
            <person name="Sinclair B."/>
            <person name="Sperling S."/>
            <person name="Stupka E."/>
            <person name="Sugiura K."/>
            <person name="Sultana R."/>
            <person name="Takenaka Y."/>
            <person name="Taki K."/>
            <person name="Tammoja K."/>
            <person name="Tan S.L."/>
            <person name="Tang S."/>
            <person name="Taylor M.S."/>
            <person name="Tegner J."/>
            <person name="Teichmann S.A."/>
            <person name="Ueda H.R."/>
            <person name="van Nimwegen E."/>
            <person name="Verardo R."/>
            <person name="Wei C.L."/>
            <person name="Yagi K."/>
            <person name="Yamanishi H."/>
            <person name="Zabarovsky E."/>
            <person name="Zhu S."/>
            <person name="Zimmer A."/>
            <person name="Hide W."/>
            <person name="Bult C."/>
            <person name="Grimmond S.M."/>
            <person name="Teasdale R.D."/>
            <person name="Liu E.T."/>
            <person name="Brusic V."/>
            <person name="Quackenbush J."/>
            <person name="Wahlestedt C."/>
            <person name="Mattick J.S."/>
            <person name="Hume D.A."/>
            <person name="Kai C."/>
            <person name="Sasaki D."/>
            <person name="Tomaru Y."/>
            <person name="Fukuda S."/>
            <person name="Kanamori-Katayama M."/>
            <person name="Suzuki M."/>
            <person name="Aoki J."/>
            <person name="Arakawa T."/>
            <person name="Iida J."/>
            <person name="Imamura K."/>
            <person name="Itoh M."/>
            <person name="Kato T."/>
            <person name="Kawaji H."/>
            <person name="Kawagashira N."/>
            <person name="Kawashima T."/>
            <person name="Kojima M."/>
            <person name="Kondo S."/>
            <person name="Konno H."/>
            <person name="Nakano K."/>
            <person name="Ninomiya N."/>
            <person name="Nishio T."/>
            <person name="Okada M."/>
            <person name="Plessy C."/>
            <person name="Shibata K."/>
            <person name="Shiraki T."/>
            <person name="Suzuki S."/>
            <person name="Tagami M."/>
            <person name="Waki K."/>
            <person name="Watahiki A."/>
            <person name="Okamura-Oho Y."/>
            <person name="Suzuki H."/>
            <person name="Kawai J."/>
            <person name="Hayashizaki Y."/>
        </authorList>
    </citation>
    <scope>NUCLEOTIDE SEQUENCE [LARGE SCALE MRNA]</scope>
    <source>
        <strain>C57BL/6J</strain>
        <strain>NOD</strain>
        <tissue>Spinal cord</tissue>
        <tissue>Thymus</tissue>
    </source>
</reference>
<reference key="3">
    <citation type="journal article" date="2004" name="Genome Res.">
        <title>The status, quality, and expansion of the NIH full-length cDNA project: the Mammalian Gene Collection (MGC).</title>
        <authorList>
            <consortium name="The MGC Project Team"/>
        </authorList>
    </citation>
    <scope>NUCLEOTIDE SEQUENCE [LARGE SCALE MRNA]</scope>
    <source>
        <strain>FVB/N</strain>
        <tissue>Mammary gland</tissue>
    </source>
</reference>
<reference key="4">
    <citation type="journal article" date="2006" name="J. Biol. Chem.">
        <title>Mouse ornithine decarboxylase-like gene encodes an antizyme inhibitor devoid of ornithine and arginine decarboxylating activity.</title>
        <authorList>
            <person name="Lopez-Contreras A.J."/>
            <person name="Lopez-Garcia C."/>
            <person name="Jimenez-Cervantes C."/>
            <person name="Cremades A."/>
            <person name="Penafiel R."/>
        </authorList>
    </citation>
    <scope>FUNCTION</scope>
</reference>
<reference key="5">
    <citation type="journal article" date="2008" name="Biochem. J.">
        <title>ODCp, a brain- and testis-specific ornithine decarboxylase paralogue, functions as an antizyme inhibitor, although less efficiently than AzI1.</title>
        <authorList>
            <person name="Snapir Z."/>
            <person name="Keren-Paz A."/>
            <person name="Bercovich Z."/>
            <person name="Kahana C."/>
        </authorList>
    </citation>
    <scope>FUNCTION</scope>
    <scope>INTERACTION WITH OAZ1 AND OAZ3</scope>
    <scope>UBIQUITINATION</scope>
</reference>
<reference key="6">
    <citation type="journal article" date="2008" name="J. Biol. Chem.">
        <title>Antizyme inhibitor 2 (AZIN2/ODCp) stimulates polyamine uptake in mammalian cells.</title>
        <authorList>
            <person name="Lopez-Contreras A.J."/>
            <person name="Ramos-Molina B."/>
            <person name="Cremades A."/>
            <person name="Penafiel R."/>
        </authorList>
    </citation>
    <scope>FUNCTION</scope>
    <scope>TISSUE SPECIFICITY</scope>
</reference>
<reference key="7">
    <citation type="journal article" date="2009" name="Int. J. Biochem. Cell Biol.">
        <title>Expression of antizyme inhibitor 2 in male haploid germinal cells suggests a role in spermiogenesis.</title>
        <authorList>
            <person name="Lopez-Contreras A.J."/>
            <person name="Ramos-Molina B."/>
            <person name="Martinez-de-la-Torre M."/>
            <person name="Penafiel-Verdu C."/>
            <person name="Puelles L."/>
            <person name="Cremades A."/>
            <person name="Penafiel R."/>
        </authorList>
    </citation>
    <scope>TISSUE SPECIFICITY</scope>
</reference>
<reference key="8">
    <citation type="journal article" date="2009" name="J. Cell. Biochem.">
        <title>Subcellular localization of antizyme inhibitor 2 in mammalian cells: Influence of intrinsic sequences and interaction with antizymes.</title>
        <authorList>
            <person name="Lopez-Contreras A.J."/>
            <person name="Sanchez-Laorden B.L."/>
            <person name="Ramos-Molina B."/>
            <person name="de la Morena M.E."/>
            <person name="Cremades A."/>
            <person name="Penafiel R."/>
        </authorList>
    </citation>
    <scope>SUBCELLULAR LOCATION</scope>
</reference>
<reference key="9">
    <citation type="journal article" date="2008" name="Protein Sci.">
        <title>Crystallographic and biochemical studies revealing the structural basis for antizyme inhibitor function.</title>
        <authorList>
            <person name="Albeck S."/>
            <person name="Dym O."/>
            <person name="Unger T."/>
            <person name="Snapir Z."/>
            <person name="Bercovich Z."/>
            <person name="Kahana C."/>
        </authorList>
    </citation>
    <scope>X-RAY CRYSTALLOGRAPHY (2.05 ANGSTROMS)</scope>
    <scope>LACK OF PYRIDOXAL PHOSPHATE BINDING</scope>
    <scope>SUBUNIT</scope>
    <scope>FUNCTION</scope>
</reference>
<sequence length="448" mass="49549">MKGFIDDANYSVGLLDEGTNLGNVIDNYVYEHTLTGKNAFFVGDLGKIVKKHSQWQTVVAQIKPFYTVKCNSTPAVLEILAALGTGFACSSKNEMALVQELGVSPENIIFTSPCKQVSQIKYAAKVGVNIMTCDNEIELKKIARNHPNAKVLLHIATEDNIGGEDGNMKFGTTLKNCRHLLECAKELDVQIIGVKFHVSSACKEYQVYVHALSDARCVFDMAGEFGFTMNMLDIGGGFTGTEIQLEEVNHVISPLLDIYFPEGSGIQIISEPGSYYVSSAFTLAVNIIAKKVVENDKFSSGVEKNGSDEPAFVYYMNDGVYGSFASKLSEDLNTIPEVHKKYKEDEPLFTSSLWGPSCDELDQIVESCLLPELNVGDWLIFDNMGADSFHEPSAFNDFQRPAIYFMMSFSDWYEMQDAGITSDAMMKNFFFAPSCIQLSQEDSFSTEA</sequence>
<gene>
    <name type="primary">Azin1</name>
    <name type="synonym">Oazi</name>
    <name type="synonym">Oazin</name>
</gene>
<name>AZIN1_MOUSE</name>
<protein>
    <recommendedName>
        <fullName>Antizyme inhibitor 1</fullName>
        <shortName>AZI</shortName>
    </recommendedName>
    <alternativeName>
        <fullName>Ornithine decarboxylase antizyme inhibitor</fullName>
    </alternativeName>
</protein>
<accession>O35484</accession>
<accession>Q542G5</accession>
<accession>Q8C2R8</accession>
<accession>Q8K1E5</accession>
<dbReference type="EMBL" id="AF032128">
    <property type="protein sequence ID" value="AAB87464.1"/>
    <property type="molecule type" value="mRNA"/>
</dbReference>
<dbReference type="EMBL" id="AK049680">
    <property type="protein sequence ID" value="BAC33870.1"/>
    <property type="molecule type" value="mRNA"/>
</dbReference>
<dbReference type="EMBL" id="AK088112">
    <property type="protein sequence ID" value="BAC40151.1"/>
    <property type="molecule type" value="mRNA"/>
</dbReference>
<dbReference type="EMBL" id="AK088671">
    <property type="protein sequence ID" value="BAC40494.1"/>
    <property type="molecule type" value="mRNA"/>
</dbReference>
<dbReference type="EMBL" id="BC019412">
    <property type="protein sequence ID" value="AAH19412.1"/>
    <property type="molecule type" value="mRNA"/>
</dbReference>
<dbReference type="EMBL" id="BC043722">
    <property type="protein sequence ID" value="AAH43722.1"/>
    <property type="molecule type" value="mRNA"/>
</dbReference>
<dbReference type="CCDS" id="CCDS37065.1"/>
<dbReference type="RefSeq" id="NP_001095928.1">
    <property type="nucleotide sequence ID" value="NM_001102458.1"/>
</dbReference>
<dbReference type="RefSeq" id="NP_001288617.1">
    <property type="nucleotide sequence ID" value="NM_001301688.1"/>
</dbReference>
<dbReference type="RefSeq" id="NP_061215.1">
    <property type="nucleotide sequence ID" value="NM_018745.5"/>
</dbReference>
<dbReference type="PDB" id="3BTN">
    <property type="method" value="X-ray"/>
    <property type="resolution" value="2.05 A"/>
    <property type="chains" value="A/B=1-448"/>
</dbReference>
<dbReference type="PDBsum" id="3BTN"/>
<dbReference type="SMR" id="O35484"/>
<dbReference type="FunCoup" id="O35484">
    <property type="interactions" value="1359"/>
</dbReference>
<dbReference type="STRING" id="10090.ENSMUSP00000065544"/>
<dbReference type="iPTMnet" id="O35484"/>
<dbReference type="PhosphoSitePlus" id="O35484"/>
<dbReference type="PaxDb" id="10090-ENSMUSP00000065544"/>
<dbReference type="ProteomicsDB" id="273643"/>
<dbReference type="Antibodypedia" id="26333">
    <property type="antibodies" value="196 antibodies from 23 providers"/>
</dbReference>
<dbReference type="DNASU" id="54375"/>
<dbReference type="Ensembl" id="ENSMUST00000065308.13">
    <property type="protein sequence ID" value="ENSMUSP00000065544.6"/>
    <property type="gene ID" value="ENSMUSG00000037458.16"/>
</dbReference>
<dbReference type="Ensembl" id="ENSMUST00000110329.8">
    <property type="protein sequence ID" value="ENSMUSP00000105958.2"/>
    <property type="gene ID" value="ENSMUSG00000037458.16"/>
</dbReference>
<dbReference type="GeneID" id="54375"/>
<dbReference type="KEGG" id="mmu:54375"/>
<dbReference type="UCSC" id="uc007vns.1">
    <property type="organism name" value="mouse"/>
</dbReference>
<dbReference type="AGR" id="MGI:1859169"/>
<dbReference type="CTD" id="51582"/>
<dbReference type="MGI" id="MGI:1859169">
    <property type="gene designation" value="Azin1"/>
</dbReference>
<dbReference type="VEuPathDB" id="HostDB:ENSMUSG00000037458"/>
<dbReference type="eggNOG" id="KOG0622">
    <property type="taxonomic scope" value="Eukaryota"/>
</dbReference>
<dbReference type="GeneTree" id="ENSGT00950000182995"/>
<dbReference type="InParanoid" id="O35484"/>
<dbReference type="OMA" id="FNGLYEM"/>
<dbReference type="OrthoDB" id="5034579at2759"/>
<dbReference type="PhylomeDB" id="O35484"/>
<dbReference type="TreeFam" id="TF300760"/>
<dbReference type="Reactome" id="R-MMU-350562">
    <property type="pathway name" value="Regulation of ornithine decarboxylase (ODC)"/>
</dbReference>
<dbReference type="BioGRID-ORCS" id="54375">
    <property type="hits" value="12 hits in 77 CRISPR screens"/>
</dbReference>
<dbReference type="ChiTaRS" id="Azin1">
    <property type="organism name" value="mouse"/>
</dbReference>
<dbReference type="EvolutionaryTrace" id="O35484"/>
<dbReference type="PRO" id="PR:O35484"/>
<dbReference type="Proteomes" id="UP000000589">
    <property type="component" value="Chromosome 15"/>
</dbReference>
<dbReference type="RNAct" id="O35484">
    <property type="molecule type" value="protein"/>
</dbReference>
<dbReference type="Bgee" id="ENSMUSG00000037458">
    <property type="expression patterns" value="Expressed in fetal liver hematopoietic progenitor cell and 255 other cell types or tissues"/>
</dbReference>
<dbReference type="ExpressionAtlas" id="O35484">
    <property type="expression patterns" value="baseline and differential"/>
</dbReference>
<dbReference type="GO" id="GO:0005634">
    <property type="term" value="C:nucleus"/>
    <property type="evidence" value="ECO:0000314"/>
    <property type="project" value="UniProtKB"/>
</dbReference>
<dbReference type="GO" id="GO:0003824">
    <property type="term" value="F:catalytic activity"/>
    <property type="evidence" value="ECO:0007669"/>
    <property type="project" value="InterPro"/>
</dbReference>
<dbReference type="GO" id="GO:0042978">
    <property type="term" value="F:ornithine decarboxylase activator activity"/>
    <property type="evidence" value="ECO:0000316"/>
    <property type="project" value="MGI"/>
</dbReference>
<dbReference type="GO" id="GO:0042177">
    <property type="term" value="P:negative regulation of protein catabolic process"/>
    <property type="evidence" value="ECO:0000250"/>
    <property type="project" value="UniProtKB"/>
</dbReference>
<dbReference type="GO" id="GO:0006596">
    <property type="term" value="P:polyamine biosynthetic process"/>
    <property type="evidence" value="ECO:0007669"/>
    <property type="project" value="UniProtKB-KW"/>
</dbReference>
<dbReference type="GO" id="GO:0006595">
    <property type="term" value="P:polyamine metabolic process"/>
    <property type="evidence" value="ECO:0000304"/>
    <property type="project" value="MGI"/>
</dbReference>
<dbReference type="GO" id="GO:1902269">
    <property type="term" value="P:positive regulation of polyamine transmembrane transport"/>
    <property type="evidence" value="ECO:0000314"/>
    <property type="project" value="UniProtKB"/>
</dbReference>
<dbReference type="CDD" id="cd06831">
    <property type="entry name" value="PLPDE_III_ODC_like_AZI"/>
    <property type="match status" value="1"/>
</dbReference>
<dbReference type="DisProt" id="DP02672"/>
<dbReference type="FunFam" id="3.20.20.10:FF:000010">
    <property type="entry name" value="Antizyme inhibitor 1"/>
    <property type="match status" value="1"/>
</dbReference>
<dbReference type="FunFam" id="2.40.37.10:FF:000008">
    <property type="entry name" value="antizyme inhibitor 1"/>
    <property type="match status" value="1"/>
</dbReference>
<dbReference type="Gene3D" id="3.20.20.10">
    <property type="entry name" value="Alanine racemase"/>
    <property type="match status" value="1"/>
</dbReference>
<dbReference type="Gene3D" id="2.40.37.10">
    <property type="entry name" value="Lyase, Ornithine Decarboxylase, Chain A, domain 1"/>
    <property type="match status" value="1"/>
</dbReference>
<dbReference type="InterPro" id="IPR009006">
    <property type="entry name" value="Ala_racemase/Decarboxylase_C"/>
</dbReference>
<dbReference type="InterPro" id="IPR031178">
    <property type="entry name" value="Azin1"/>
</dbReference>
<dbReference type="InterPro" id="IPR022643">
    <property type="entry name" value="De-COase2_C"/>
</dbReference>
<dbReference type="InterPro" id="IPR022657">
    <property type="entry name" value="De-COase2_CS"/>
</dbReference>
<dbReference type="InterPro" id="IPR022644">
    <property type="entry name" value="De-COase2_N"/>
</dbReference>
<dbReference type="InterPro" id="IPR000183">
    <property type="entry name" value="Orn/DAP/Arg_de-COase"/>
</dbReference>
<dbReference type="InterPro" id="IPR002433">
    <property type="entry name" value="Orn_de-COase"/>
</dbReference>
<dbReference type="InterPro" id="IPR029066">
    <property type="entry name" value="PLP-binding_barrel"/>
</dbReference>
<dbReference type="PANTHER" id="PTHR11482:SF7">
    <property type="entry name" value="ANTIZYME INHIBITOR 1"/>
    <property type="match status" value="1"/>
</dbReference>
<dbReference type="PANTHER" id="PTHR11482">
    <property type="entry name" value="ARGININE/DIAMINOPIMELATE/ORNITHINE DECARBOXYLASE"/>
    <property type="match status" value="1"/>
</dbReference>
<dbReference type="Pfam" id="PF02784">
    <property type="entry name" value="Orn_Arg_deC_N"/>
    <property type="match status" value="1"/>
</dbReference>
<dbReference type="Pfam" id="PF00278">
    <property type="entry name" value="Orn_DAP_Arg_deC"/>
    <property type="match status" value="1"/>
</dbReference>
<dbReference type="PRINTS" id="PR01179">
    <property type="entry name" value="ODADCRBXLASE"/>
</dbReference>
<dbReference type="PRINTS" id="PR01182">
    <property type="entry name" value="ORNDCRBXLASE"/>
</dbReference>
<dbReference type="SUPFAM" id="SSF50621">
    <property type="entry name" value="Alanine racemase C-terminal domain-like"/>
    <property type="match status" value="1"/>
</dbReference>
<dbReference type="SUPFAM" id="SSF51419">
    <property type="entry name" value="PLP-binding barrel"/>
    <property type="match status" value="1"/>
</dbReference>
<dbReference type="PROSITE" id="PS00879">
    <property type="entry name" value="ODR_DC_2_2"/>
    <property type="match status" value="1"/>
</dbReference>
<organism>
    <name type="scientific">Mus musculus</name>
    <name type="common">Mouse</name>
    <dbReference type="NCBI Taxonomy" id="10090"/>
    <lineage>
        <taxon>Eukaryota</taxon>
        <taxon>Metazoa</taxon>
        <taxon>Chordata</taxon>
        <taxon>Craniata</taxon>
        <taxon>Vertebrata</taxon>
        <taxon>Euteleostomi</taxon>
        <taxon>Mammalia</taxon>
        <taxon>Eutheria</taxon>
        <taxon>Euarchontoglires</taxon>
        <taxon>Glires</taxon>
        <taxon>Rodentia</taxon>
        <taxon>Myomorpha</taxon>
        <taxon>Muroidea</taxon>
        <taxon>Muridae</taxon>
        <taxon>Murinae</taxon>
        <taxon>Mus</taxon>
        <taxon>Mus</taxon>
    </lineage>
</organism>
<comment type="function">
    <text evidence="1 2 3 4 5">Antizyme inhibitor (AZI) protein that positively regulates ornithine decarboxylase (ODC) activity and polyamine uptake. AZI is an enzymatically inactive ODC homolog that counteracts the negative effect of ODC antizymes (AZs) OAZ1, OAZ2 and OAZ3 on ODC activity by competing with ODC for antizyme-binding (PubMed:16916800, PubMed:18062773, PubMed:18508777). Inhibits antizyme-dependent ODC degradation and releases ODC monomers from their inactive complex with antizymes, leading to formation of the catalytically active ODC homodimer and restoring polyamine production (PubMed:10698696, PubMed:18062773, PubMed:18369191).</text>
</comment>
<comment type="subunit">
    <text evidence="3 4">Monomer (PubMed:18369191). Interacts with OAZ1 and OAZ3; this interaction disrupts the interaction between the antizyme and ODC1 (PubMed:18062773, PubMed:18369191).</text>
</comment>
<comment type="subcellular location">
    <subcellularLocation>
        <location evidence="7">Nucleus</location>
    </subcellularLocation>
</comment>
<comment type="tissue specificity">
    <text evidence="5 6">Expressed during testis development.</text>
</comment>
<comment type="PTM">
    <text evidence="3">Ubiquitinated, leading to its proteasomal degradation; a process that is reduced in presence of antizyme OAZ1.</text>
</comment>
<comment type="similarity">
    <text evidence="8">Belongs to the Orn/Lys/Arg decarboxylase class-II family. ODC antizyme inhibitor subfamily.</text>
</comment>
<feature type="chain" id="PRO_0000149993" description="Antizyme inhibitor 1">
    <location>
        <begin position="1"/>
        <end position="448"/>
    </location>
</feature>
<feature type="site" description="Not modified" evidence="4 9">
    <location>
        <position position="69"/>
    </location>
</feature>
<feature type="sequence conflict" description="In Ref. 3; AAH19412." evidence="8" ref="3">
    <original>G</original>
    <variation>E</variation>
    <location>
        <position position="36"/>
    </location>
</feature>
<feature type="sequence conflict" description="In Ref. 2; BAC40151." evidence="8" ref="2">
    <original>S</original>
    <variation>G</variation>
    <location>
        <position position="367"/>
    </location>
</feature>
<feature type="strand" evidence="10">
    <location>
        <begin position="10"/>
        <end position="15"/>
    </location>
</feature>
<feature type="helix" evidence="10">
    <location>
        <begin position="21"/>
        <end position="34"/>
    </location>
</feature>
<feature type="strand" evidence="10">
    <location>
        <begin position="40"/>
        <end position="44"/>
    </location>
</feature>
<feature type="helix" evidence="10">
    <location>
        <begin position="45"/>
        <end position="58"/>
    </location>
</feature>
<feature type="strand" evidence="10">
    <location>
        <begin position="62"/>
        <end position="67"/>
    </location>
</feature>
<feature type="helix" evidence="10">
    <location>
        <begin position="68"/>
        <end position="70"/>
    </location>
</feature>
<feature type="helix" evidence="10">
    <location>
        <begin position="74"/>
        <end position="83"/>
    </location>
</feature>
<feature type="strand" evidence="10">
    <location>
        <begin position="86"/>
        <end position="91"/>
    </location>
</feature>
<feature type="helix" evidence="10">
    <location>
        <begin position="92"/>
        <end position="100"/>
    </location>
</feature>
<feature type="helix" evidence="10">
    <location>
        <begin position="105"/>
        <end position="107"/>
    </location>
</feature>
<feature type="strand" evidence="10">
    <location>
        <begin position="108"/>
        <end position="110"/>
    </location>
</feature>
<feature type="helix" evidence="10">
    <location>
        <begin position="117"/>
        <end position="126"/>
    </location>
</feature>
<feature type="strand" evidence="10">
    <location>
        <begin position="130"/>
        <end position="133"/>
    </location>
</feature>
<feature type="helix" evidence="10">
    <location>
        <begin position="136"/>
        <end position="145"/>
    </location>
</feature>
<feature type="strand" evidence="10">
    <location>
        <begin position="150"/>
        <end position="155"/>
    </location>
</feature>
<feature type="helix" evidence="10">
    <location>
        <begin position="174"/>
        <end position="187"/>
    </location>
</feature>
<feature type="strand" evidence="10">
    <location>
        <begin position="190"/>
        <end position="195"/>
    </location>
</feature>
<feature type="helix" evidence="10">
    <location>
        <begin position="207"/>
        <end position="224"/>
    </location>
</feature>
<feature type="strand" evidence="10">
    <location>
        <begin position="231"/>
        <end position="233"/>
    </location>
</feature>
<feature type="helix" evidence="10">
    <location>
        <begin position="242"/>
        <end position="259"/>
    </location>
</feature>
<feature type="strand" evidence="10">
    <location>
        <begin position="267"/>
        <end position="270"/>
    </location>
</feature>
<feature type="helix" evidence="10">
    <location>
        <begin position="274"/>
        <end position="277"/>
    </location>
</feature>
<feature type="turn" evidence="10">
    <location>
        <begin position="278"/>
        <end position="280"/>
    </location>
</feature>
<feature type="strand" evidence="10">
    <location>
        <begin position="281"/>
        <end position="292"/>
    </location>
</feature>
<feature type="strand" evidence="10">
    <location>
        <begin position="312"/>
        <end position="317"/>
    </location>
</feature>
<feature type="turn" evidence="10">
    <location>
        <begin position="320"/>
        <end position="324"/>
    </location>
</feature>
<feature type="helix" evidence="10">
    <location>
        <begin position="325"/>
        <end position="328"/>
    </location>
</feature>
<feature type="strand" evidence="10">
    <location>
        <begin position="348"/>
        <end position="354"/>
    </location>
</feature>
<feature type="strand" evidence="10">
    <location>
        <begin position="363"/>
        <end position="371"/>
    </location>
</feature>
<feature type="strand" evidence="10">
    <location>
        <begin position="378"/>
        <end position="383"/>
    </location>
</feature>
<feature type="helix" evidence="10">
    <location>
        <begin position="394"/>
        <end position="396"/>
    </location>
</feature>
<feature type="strand" evidence="10">
    <location>
        <begin position="402"/>
        <end position="408"/>
    </location>
</feature>
<feature type="helix" evidence="10">
    <location>
        <begin position="409"/>
        <end position="417"/>
    </location>
</feature>
<feature type="helix" evidence="10">
    <location>
        <begin position="420"/>
        <end position="422"/>
    </location>
</feature>
<feature type="helix" evidence="10">
    <location>
        <begin position="424"/>
        <end position="426"/>
    </location>
</feature>
<feature type="strand" evidence="10">
    <location>
        <begin position="429"/>
        <end position="433"/>
    </location>
</feature>
<proteinExistence type="evidence at protein level"/>
<keyword id="KW-0002">3D-structure</keyword>
<keyword id="KW-0539">Nucleus</keyword>
<keyword id="KW-0620">Polyamine biosynthesis</keyword>
<keyword id="KW-1185">Reference proteome</keyword>
<keyword id="KW-0832">Ubl conjugation</keyword>